<accession>Q4KCM5</accession>
<comment type="function">
    <text evidence="1">Catalyzes the deacylation of acyl-homoserine lactone (AHL or acyl-HSL), releasing homoserine lactone (HSL) and the corresponding fatty acid. Possesses a specificity for the degradation of long-chain acyl-HSLs (side chains of 11 to 14 carbons in length) (By similarity).</text>
</comment>
<comment type="catalytic activity">
    <reaction>
        <text>an N-acyl-L-homoserine lactone + H2O = L-homoserine lactone + a carboxylate</text>
        <dbReference type="Rhea" id="RHEA:18937"/>
        <dbReference type="ChEBI" id="CHEBI:15377"/>
        <dbReference type="ChEBI" id="CHEBI:29067"/>
        <dbReference type="ChEBI" id="CHEBI:55474"/>
        <dbReference type="ChEBI" id="CHEBI:58633"/>
        <dbReference type="EC" id="3.5.1.97"/>
    </reaction>
</comment>
<comment type="subunit">
    <text evidence="1">Heterodimer of an alpha subunit and a beta subunit processed from the same precursor.</text>
</comment>
<comment type="subcellular location">
    <subcellularLocation>
        <location evidence="1">Periplasm</location>
    </subcellularLocation>
</comment>
<comment type="miscellaneous">
    <text>AHL-mediated signaling mediates quorum sensing in many species of Proteobacteria, regulating hundreds of genes, including many that code for extracellular virulence factors.</text>
</comment>
<comment type="similarity">
    <text evidence="3">Belongs to the peptidase S45 family.</text>
</comment>
<gene>
    <name type="primary">pvdQ</name>
    <name type="ordered locus">PFL_2902</name>
</gene>
<evidence type="ECO:0000250" key="1"/>
<evidence type="ECO:0000255" key="2"/>
<evidence type="ECO:0000305" key="3"/>
<reference key="1">
    <citation type="journal article" date="2005" name="Nat. Biotechnol.">
        <title>Complete genome sequence of the plant commensal Pseudomonas fluorescens Pf-5.</title>
        <authorList>
            <person name="Paulsen I.T."/>
            <person name="Press C.M."/>
            <person name="Ravel J."/>
            <person name="Kobayashi D.Y."/>
            <person name="Myers G.S.A."/>
            <person name="Mavrodi D.V."/>
            <person name="DeBoy R.T."/>
            <person name="Seshadri R."/>
            <person name="Ren Q."/>
            <person name="Madupu R."/>
            <person name="Dodson R.J."/>
            <person name="Durkin A.S."/>
            <person name="Brinkac L.M."/>
            <person name="Daugherty S.C."/>
            <person name="Sullivan S.A."/>
            <person name="Rosovitz M.J."/>
            <person name="Gwinn M.L."/>
            <person name="Zhou L."/>
            <person name="Schneider D.J."/>
            <person name="Cartinhour S.W."/>
            <person name="Nelson W.C."/>
            <person name="Weidman J."/>
            <person name="Watkins K."/>
            <person name="Tran K."/>
            <person name="Khouri H."/>
            <person name="Pierson E.A."/>
            <person name="Pierson L.S. III"/>
            <person name="Thomashow L.S."/>
            <person name="Loper J.E."/>
        </authorList>
    </citation>
    <scope>NUCLEOTIDE SEQUENCE [LARGE SCALE GENOMIC DNA]</scope>
    <source>
        <strain>ATCC BAA-477 / NRRL B-23932 / Pf-5</strain>
    </source>
</reference>
<sequence length="777" mass="84990">MIISRQLPSFCLAALFLSFSGGAHALAQPEQTRAEIRRTSFGVPHIRADDERGLGYGIGYAYAQDNLCLMANEVLTVNAQRSQYFGAEGQTLEQRDNLSSDLFFSWLNTPQAVAAFWQAQTPAMRERMQGYVEGYNRQLAERQVQGLPEQCRGDWVRPLATSDLVKLTRRLLVEGGAGQFAEALAGATPPGATAQAGLPAEHWQLAAARQQRFALDRGSNAVAIGSERSFNGRGLLLANPHFPWVGGMRFYQMHLTIPGQLDVMGAALPGLPLINIGFNQHLAWTHTVDASKHFTLYRLQLDPKDPTRYLLDGRSLPLERQTLTVQSKGPDGQLQPRTRTLYSSVFGPIVQWPGELDWDHQYAYSLRDANLDNSRVLAQWYAMNQASSVAGLQDSVHQLQGIPWVNTLAVDDQGRALYMNQSVVPNVTQAKLAQCSDPRAGTRVIVLDGSRSACAWDIDPAAAQPGIFAASQLPQLARNDYLQHSNDSAWMVNPAAPLQGFSPVISEQDVPLKMRARFALDRLSRMHKAQVSDLQHLVTDDQVYLAGQVMPDLLQFCEQDLGADAQRLGPVCASLKAWDRSAGLQAGLGFVHFQGIMQPLLQDPSVWRVAFDPKDPQHTPRGLAIGRPAVARALRESMLASAQQVAEAGLGSDVRWGDIQQVSQGGQPTPVPGGPESLGVYNAIQSVPAADGKREVVSGTSYLNVVSFDEQGPRALGLLAFSLSSDPASAHFRDQTAAFARNQWSVLPFTEAQIRADGQYQLQVIEEPRKGAVLARQ</sequence>
<feature type="signal peptide" evidence="2">
    <location>
        <begin position="1"/>
        <end position="25"/>
    </location>
</feature>
<feature type="chain" id="PRO_0000253357" description="Acyl-homoserine lactone acylase PvdQ">
    <location>
        <begin position="26"/>
        <end position="777"/>
    </location>
</feature>
<feature type="chain" id="PRO_0000253358" description="Acyl-homoserine lactone acylase PvdQ subunit alpha">
    <location>
        <begin position="26"/>
        <end position="195" status="uncertain"/>
    </location>
</feature>
<feature type="propeptide" id="PRO_0000253359" description="Spacer peptide" evidence="1">
    <location>
        <begin position="196" status="uncertain"/>
        <end position="218"/>
    </location>
</feature>
<feature type="chain" id="PRO_0000253360" description="Acyl-homoserine lactone acylase PvdQ subunit beta">
    <location>
        <begin position="219"/>
        <end position="777"/>
    </location>
</feature>
<feature type="active site" description="Nucleophile" evidence="1">
    <location>
        <position position="219"/>
    </location>
</feature>
<name>PVDQ_PSEF5</name>
<protein>
    <recommendedName>
        <fullName>Acyl-homoserine lactone acylase PvdQ</fullName>
        <shortName>AHL acylase PvdQ</shortName>
        <shortName>Acyl-HSL acylase PvdQ</shortName>
        <ecNumber>3.5.1.97</ecNumber>
    </recommendedName>
    <component>
        <recommendedName>
            <fullName>Acyl-homoserine lactone acylase PvdQ subunit alpha</fullName>
            <shortName>Acyl-HSL acylase PvdQ subunit alpha</shortName>
        </recommendedName>
    </component>
    <component>
        <recommendedName>
            <fullName>Acyl-homoserine lactone acylase PvdQ subunit beta</fullName>
            <shortName>Acyl-HSL acylase PvdQ subunit beta</shortName>
        </recommendedName>
    </component>
</protein>
<organism>
    <name type="scientific">Pseudomonas fluorescens (strain ATCC BAA-477 / NRRL B-23932 / Pf-5)</name>
    <dbReference type="NCBI Taxonomy" id="220664"/>
    <lineage>
        <taxon>Bacteria</taxon>
        <taxon>Pseudomonadati</taxon>
        <taxon>Pseudomonadota</taxon>
        <taxon>Gammaproteobacteria</taxon>
        <taxon>Pseudomonadales</taxon>
        <taxon>Pseudomonadaceae</taxon>
        <taxon>Pseudomonas</taxon>
    </lineage>
</organism>
<keyword id="KW-0378">Hydrolase</keyword>
<keyword id="KW-0574">Periplasm</keyword>
<keyword id="KW-0673">Quorum sensing</keyword>
<keyword id="KW-0732">Signal</keyword>
<keyword id="KW-0865">Zymogen</keyword>
<proteinExistence type="inferred from homology"/>
<dbReference type="EC" id="3.5.1.97"/>
<dbReference type="EMBL" id="CP000076">
    <property type="protein sequence ID" value="AAY92174.1"/>
    <property type="molecule type" value="Genomic_DNA"/>
</dbReference>
<dbReference type="RefSeq" id="WP_011061191.1">
    <property type="nucleotide sequence ID" value="NC_004129.6"/>
</dbReference>
<dbReference type="SMR" id="Q4KCM5"/>
<dbReference type="STRING" id="220664.PFL_2902"/>
<dbReference type="KEGG" id="pfl:PFL_2902"/>
<dbReference type="PATRIC" id="fig|220664.5.peg.2958"/>
<dbReference type="eggNOG" id="COG2366">
    <property type="taxonomic scope" value="Bacteria"/>
</dbReference>
<dbReference type="HOGENOM" id="CLU_017615_0_0_6"/>
<dbReference type="Proteomes" id="UP000008540">
    <property type="component" value="Chromosome"/>
</dbReference>
<dbReference type="GO" id="GO:0042597">
    <property type="term" value="C:periplasmic space"/>
    <property type="evidence" value="ECO:0007669"/>
    <property type="project" value="UniProtKB-SubCell"/>
</dbReference>
<dbReference type="GO" id="GO:0016811">
    <property type="term" value="F:hydrolase activity, acting on carbon-nitrogen (but not peptide) bonds, in linear amides"/>
    <property type="evidence" value="ECO:0007669"/>
    <property type="project" value="InterPro"/>
</dbReference>
<dbReference type="GO" id="GO:0017000">
    <property type="term" value="P:antibiotic biosynthetic process"/>
    <property type="evidence" value="ECO:0007669"/>
    <property type="project" value="InterPro"/>
</dbReference>
<dbReference type="GO" id="GO:0009372">
    <property type="term" value="P:quorum sensing"/>
    <property type="evidence" value="ECO:0007669"/>
    <property type="project" value="UniProtKB-KW"/>
</dbReference>
<dbReference type="CDD" id="cd01936">
    <property type="entry name" value="Ntn_CA"/>
    <property type="match status" value="1"/>
</dbReference>
<dbReference type="Gene3D" id="1.10.1400.10">
    <property type="match status" value="1"/>
</dbReference>
<dbReference type="Gene3D" id="2.30.120.10">
    <property type="match status" value="1"/>
</dbReference>
<dbReference type="Gene3D" id="3.60.20.10">
    <property type="entry name" value="Glutamine Phosphoribosylpyrophosphate, subunit 1, domain 1"/>
    <property type="match status" value="1"/>
</dbReference>
<dbReference type="Gene3D" id="1.10.439.10">
    <property type="entry name" value="Penicillin Amidohydrolase, domain 1"/>
    <property type="match status" value="1"/>
</dbReference>
<dbReference type="InterPro" id="IPR029055">
    <property type="entry name" value="Ntn_hydrolases_N"/>
</dbReference>
<dbReference type="InterPro" id="IPR043147">
    <property type="entry name" value="Penicillin_amidase_A-knob"/>
</dbReference>
<dbReference type="InterPro" id="IPR023343">
    <property type="entry name" value="Penicillin_amidase_dom1"/>
</dbReference>
<dbReference type="InterPro" id="IPR043146">
    <property type="entry name" value="Penicillin_amidase_N_B-knob"/>
</dbReference>
<dbReference type="InterPro" id="IPR002692">
    <property type="entry name" value="S45"/>
</dbReference>
<dbReference type="PANTHER" id="PTHR34218:SF3">
    <property type="entry name" value="ACYL-HOMOSERINE LACTONE ACYLASE PVDQ"/>
    <property type="match status" value="1"/>
</dbReference>
<dbReference type="PANTHER" id="PTHR34218">
    <property type="entry name" value="PEPTIDASE S45 PENICILLIN AMIDASE"/>
    <property type="match status" value="1"/>
</dbReference>
<dbReference type="Pfam" id="PF01804">
    <property type="entry name" value="Penicil_amidase"/>
    <property type="match status" value="1"/>
</dbReference>
<dbReference type="SUPFAM" id="SSF56235">
    <property type="entry name" value="N-terminal nucleophile aminohydrolases (Ntn hydrolases)"/>
    <property type="match status" value="1"/>
</dbReference>